<evidence type="ECO:0000255" key="1">
    <source>
        <dbReference type="HAMAP-Rule" id="MF_00173"/>
    </source>
</evidence>
<evidence type="ECO:0000256" key="2">
    <source>
        <dbReference type="SAM" id="MobiDB-lite"/>
    </source>
</evidence>
<feature type="chain" id="PRO_0000205105" description="Arginine repressor">
    <location>
        <begin position="1"/>
        <end position="175"/>
    </location>
</feature>
<feature type="region of interest" description="Disordered" evidence="2">
    <location>
        <begin position="1"/>
        <end position="23"/>
    </location>
</feature>
<comment type="function">
    <text evidence="1">Regulates arginine biosynthesis genes.</text>
</comment>
<comment type="pathway">
    <text>Amino-acid biosynthesis; L-arginine biosynthesis [regulation].</text>
</comment>
<comment type="subcellular location">
    <subcellularLocation>
        <location evidence="1">Cytoplasm</location>
    </subcellularLocation>
</comment>
<comment type="similarity">
    <text evidence="1">Belongs to the ArgR family.</text>
</comment>
<sequence length="175" mass="17681">MSVSTPERGGAEQGKGPAIARTRAGRQSRIVELLSAHAVRSQSELAALLAAEGIETTQATLSRDLDELGAVKLRAADGGAGVYVVPEDGSPVRGVTGGTDRLSKLLGDLLVSTDASGNIAVLRTPPGAAGYLASALDRAALPYVVGTIAGDDTIAVIAREPLTGAELAAKIEELA</sequence>
<reference key="1">
    <citation type="journal article" date="2004" name="Proc. Natl. Acad. Sci. U.S.A.">
        <title>The complete genomic sequence of Nocardia farcinica IFM 10152.</title>
        <authorList>
            <person name="Ishikawa J."/>
            <person name="Yamashita A."/>
            <person name="Mikami Y."/>
            <person name="Hoshino Y."/>
            <person name="Kurita H."/>
            <person name="Hotta K."/>
            <person name="Shiba T."/>
            <person name="Hattori M."/>
        </authorList>
    </citation>
    <scope>NUCLEOTIDE SEQUENCE [LARGE SCALE GENOMIC DNA]</scope>
    <source>
        <strain>IFM 10152</strain>
    </source>
</reference>
<gene>
    <name evidence="1" type="primary">argR</name>
    <name type="ordered locus">NFA_19410</name>
</gene>
<protein>
    <recommendedName>
        <fullName evidence="1">Arginine repressor</fullName>
    </recommendedName>
</protein>
<organism>
    <name type="scientific">Nocardia farcinica (strain IFM 10152)</name>
    <dbReference type="NCBI Taxonomy" id="247156"/>
    <lineage>
        <taxon>Bacteria</taxon>
        <taxon>Bacillati</taxon>
        <taxon>Actinomycetota</taxon>
        <taxon>Actinomycetes</taxon>
        <taxon>Mycobacteriales</taxon>
        <taxon>Nocardiaceae</taxon>
        <taxon>Nocardia</taxon>
    </lineage>
</organism>
<keyword id="KW-0028">Amino-acid biosynthesis</keyword>
<keyword id="KW-0055">Arginine biosynthesis</keyword>
<keyword id="KW-0963">Cytoplasm</keyword>
<keyword id="KW-0238">DNA-binding</keyword>
<keyword id="KW-1185">Reference proteome</keyword>
<keyword id="KW-0678">Repressor</keyword>
<keyword id="KW-0804">Transcription</keyword>
<keyword id="KW-0805">Transcription regulation</keyword>
<proteinExistence type="inferred from homology"/>
<dbReference type="EMBL" id="AP006618">
    <property type="protein sequence ID" value="BAD56787.1"/>
    <property type="molecule type" value="Genomic_DNA"/>
</dbReference>
<dbReference type="RefSeq" id="WP_011208472.1">
    <property type="nucleotide sequence ID" value="NC_006361.1"/>
</dbReference>
<dbReference type="SMR" id="Q5YYF4"/>
<dbReference type="STRING" id="247156.NFA_19410"/>
<dbReference type="GeneID" id="61132723"/>
<dbReference type="KEGG" id="nfa:NFA_19410"/>
<dbReference type="eggNOG" id="COG1438">
    <property type="taxonomic scope" value="Bacteria"/>
</dbReference>
<dbReference type="HOGENOM" id="CLU_097103_1_1_11"/>
<dbReference type="OrthoDB" id="7060358at2"/>
<dbReference type="UniPathway" id="UPA00068"/>
<dbReference type="Proteomes" id="UP000006820">
    <property type="component" value="Chromosome"/>
</dbReference>
<dbReference type="GO" id="GO:0005737">
    <property type="term" value="C:cytoplasm"/>
    <property type="evidence" value="ECO:0007669"/>
    <property type="project" value="UniProtKB-SubCell"/>
</dbReference>
<dbReference type="GO" id="GO:0034618">
    <property type="term" value="F:arginine binding"/>
    <property type="evidence" value="ECO:0007669"/>
    <property type="project" value="InterPro"/>
</dbReference>
<dbReference type="GO" id="GO:0003677">
    <property type="term" value="F:DNA binding"/>
    <property type="evidence" value="ECO:0007669"/>
    <property type="project" value="UniProtKB-KW"/>
</dbReference>
<dbReference type="GO" id="GO:0003700">
    <property type="term" value="F:DNA-binding transcription factor activity"/>
    <property type="evidence" value="ECO:0007669"/>
    <property type="project" value="UniProtKB-UniRule"/>
</dbReference>
<dbReference type="GO" id="GO:0006526">
    <property type="term" value="P:L-arginine biosynthetic process"/>
    <property type="evidence" value="ECO:0007669"/>
    <property type="project" value="UniProtKB-UniPathway"/>
</dbReference>
<dbReference type="GO" id="GO:0051259">
    <property type="term" value="P:protein complex oligomerization"/>
    <property type="evidence" value="ECO:0007669"/>
    <property type="project" value="InterPro"/>
</dbReference>
<dbReference type="GO" id="GO:1900079">
    <property type="term" value="P:regulation of arginine biosynthetic process"/>
    <property type="evidence" value="ECO:0007669"/>
    <property type="project" value="UniProtKB-UniRule"/>
</dbReference>
<dbReference type="Gene3D" id="3.30.1360.40">
    <property type="match status" value="1"/>
</dbReference>
<dbReference type="Gene3D" id="1.10.10.10">
    <property type="entry name" value="Winged helix-like DNA-binding domain superfamily/Winged helix DNA-binding domain"/>
    <property type="match status" value="1"/>
</dbReference>
<dbReference type="HAMAP" id="MF_00173">
    <property type="entry name" value="Arg_repressor"/>
    <property type="match status" value="1"/>
</dbReference>
<dbReference type="InterPro" id="IPR001669">
    <property type="entry name" value="Arg_repress"/>
</dbReference>
<dbReference type="InterPro" id="IPR020899">
    <property type="entry name" value="Arg_repress_C"/>
</dbReference>
<dbReference type="InterPro" id="IPR036251">
    <property type="entry name" value="Arg_repress_C_sf"/>
</dbReference>
<dbReference type="InterPro" id="IPR020900">
    <property type="entry name" value="Arg_repress_DNA-bd"/>
</dbReference>
<dbReference type="InterPro" id="IPR036388">
    <property type="entry name" value="WH-like_DNA-bd_sf"/>
</dbReference>
<dbReference type="InterPro" id="IPR036390">
    <property type="entry name" value="WH_DNA-bd_sf"/>
</dbReference>
<dbReference type="NCBIfam" id="TIGR01529">
    <property type="entry name" value="argR_whole"/>
    <property type="match status" value="1"/>
</dbReference>
<dbReference type="NCBIfam" id="NF002880">
    <property type="entry name" value="PRK03341.1"/>
    <property type="match status" value="1"/>
</dbReference>
<dbReference type="PANTHER" id="PTHR34471">
    <property type="entry name" value="ARGININE REPRESSOR"/>
    <property type="match status" value="1"/>
</dbReference>
<dbReference type="PANTHER" id="PTHR34471:SF1">
    <property type="entry name" value="ARGININE REPRESSOR"/>
    <property type="match status" value="1"/>
</dbReference>
<dbReference type="Pfam" id="PF01316">
    <property type="entry name" value="Arg_repressor"/>
    <property type="match status" value="1"/>
</dbReference>
<dbReference type="Pfam" id="PF02863">
    <property type="entry name" value="Arg_repressor_C"/>
    <property type="match status" value="1"/>
</dbReference>
<dbReference type="PRINTS" id="PR01467">
    <property type="entry name" value="ARGREPRESSOR"/>
</dbReference>
<dbReference type="SUPFAM" id="SSF55252">
    <property type="entry name" value="C-terminal domain of arginine repressor"/>
    <property type="match status" value="1"/>
</dbReference>
<dbReference type="SUPFAM" id="SSF46785">
    <property type="entry name" value="Winged helix' DNA-binding domain"/>
    <property type="match status" value="1"/>
</dbReference>
<accession>Q5YYF4</accession>
<name>ARGR_NOCFA</name>